<protein>
    <recommendedName>
        <fullName evidence="1">Adenylosuccinate synthetase</fullName>
        <shortName evidence="1">AMPSase</shortName>
        <shortName evidence="1">AdSS</shortName>
        <ecNumber evidence="1">6.3.4.4</ecNumber>
    </recommendedName>
    <alternativeName>
        <fullName evidence="1">IMP--aspartate ligase</fullName>
    </alternativeName>
</protein>
<gene>
    <name evidence="1" type="primary">purA</name>
    <name type="ordered locus">ACIAD1258</name>
</gene>
<reference key="1">
    <citation type="journal article" date="2004" name="Nucleic Acids Res.">
        <title>Unique features revealed by the genome sequence of Acinetobacter sp. ADP1, a versatile and naturally transformation competent bacterium.</title>
        <authorList>
            <person name="Barbe V."/>
            <person name="Vallenet D."/>
            <person name="Fonknechten N."/>
            <person name="Kreimeyer A."/>
            <person name="Oztas S."/>
            <person name="Labarre L."/>
            <person name="Cruveiller S."/>
            <person name="Robert C."/>
            <person name="Duprat S."/>
            <person name="Wincker P."/>
            <person name="Ornston L.N."/>
            <person name="Weissenbach J."/>
            <person name="Marliere P."/>
            <person name="Cohen G.N."/>
            <person name="Medigue C."/>
        </authorList>
    </citation>
    <scope>NUCLEOTIDE SEQUENCE [LARGE SCALE GENOMIC DNA]</scope>
    <source>
        <strain>ATCC 33305 / BD413 / ADP1</strain>
    </source>
</reference>
<sequence length="439" mass="47238">MGKNVVVLGTQWGDEGKGKIVDLLTDQAAAVVRYQGGHNAGHTLVVGGKKTVLHLIPSGILRENVLCLIGNGVVLSPAALIKEMGILEEEGVPVKERLRISPNCPLILPNHIALDQAREKKRGNAKIGTTGRGIGPAYEDKVARRAVRVADLVRGGAALEEKLQEMLELHNFQLTQFYGVEAVKFEDVLALCNEWREVLAPLVIDVTKVLHDYRKEGKAIMFEGAQGSLLDIDHGTYPYVTSSNTTAGGVSSGSGMGPLHLDYVLGITKAYTTRVGAGPFPTELHYDAATDTGDAIGRHLGTVGHEFGASTGRQRRCGWFDAEILRRSVEVNSLSGICLTKLDVLDGLDEIKICVGYEDVDSGCAGSSDAVSFESLKPIYETMPGWSESTVGLTSIDQLPANALAYVKRIEQLIECPIDIISTGPDRAETMILRHPFSA</sequence>
<feature type="chain" id="PRO_0000224247" description="Adenylosuccinate synthetase">
    <location>
        <begin position="1"/>
        <end position="439"/>
    </location>
</feature>
<feature type="active site" description="Proton acceptor" evidence="1">
    <location>
        <position position="14"/>
    </location>
</feature>
<feature type="active site" description="Proton donor" evidence="1">
    <location>
        <position position="42"/>
    </location>
</feature>
<feature type="binding site" evidence="1">
    <location>
        <begin position="13"/>
        <end position="19"/>
    </location>
    <ligand>
        <name>GTP</name>
        <dbReference type="ChEBI" id="CHEBI:37565"/>
    </ligand>
</feature>
<feature type="binding site" description="in other chain" evidence="1">
    <location>
        <begin position="14"/>
        <end position="17"/>
    </location>
    <ligand>
        <name>IMP</name>
        <dbReference type="ChEBI" id="CHEBI:58053"/>
        <note>ligand shared between dimeric partners</note>
    </ligand>
</feature>
<feature type="binding site" evidence="1">
    <location>
        <position position="14"/>
    </location>
    <ligand>
        <name>Mg(2+)</name>
        <dbReference type="ChEBI" id="CHEBI:18420"/>
    </ligand>
</feature>
<feature type="binding site" description="in other chain" evidence="1">
    <location>
        <begin position="39"/>
        <end position="42"/>
    </location>
    <ligand>
        <name>IMP</name>
        <dbReference type="ChEBI" id="CHEBI:58053"/>
        <note>ligand shared between dimeric partners</note>
    </ligand>
</feature>
<feature type="binding site" evidence="1">
    <location>
        <begin position="41"/>
        <end position="43"/>
    </location>
    <ligand>
        <name>GTP</name>
        <dbReference type="ChEBI" id="CHEBI:37565"/>
    </ligand>
</feature>
<feature type="binding site" evidence="1">
    <location>
        <position position="41"/>
    </location>
    <ligand>
        <name>Mg(2+)</name>
        <dbReference type="ChEBI" id="CHEBI:18420"/>
    </ligand>
</feature>
<feature type="binding site" description="in other chain" evidence="1">
    <location>
        <position position="130"/>
    </location>
    <ligand>
        <name>IMP</name>
        <dbReference type="ChEBI" id="CHEBI:58053"/>
        <note>ligand shared between dimeric partners</note>
    </ligand>
</feature>
<feature type="binding site" evidence="1">
    <location>
        <position position="144"/>
    </location>
    <ligand>
        <name>IMP</name>
        <dbReference type="ChEBI" id="CHEBI:58053"/>
        <note>ligand shared between dimeric partners</note>
    </ligand>
</feature>
<feature type="binding site" description="in other chain" evidence="1">
    <location>
        <position position="226"/>
    </location>
    <ligand>
        <name>IMP</name>
        <dbReference type="ChEBI" id="CHEBI:58053"/>
        <note>ligand shared between dimeric partners</note>
    </ligand>
</feature>
<feature type="binding site" description="in other chain" evidence="1">
    <location>
        <position position="241"/>
    </location>
    <ligand>
        <name>IMP</name>
        <dbReference type="ChEBI" id="CHEBI:58053"/>
        <note>ligand shared between dimeric partners</note>
    </ligand>
</feature>
<feature type="binding site" evidence="1">
    <location>
        <begin position="309"/>
        <end position="315"/>
    </location>
    <ligand>
        <name>substrate</name>
    </ligand>
</feature>
<feature type="binding site" description="in other chain" evidence="1">
    <location>
        <position position="313"/>
    </location>
    <ligand>
        <name>IMP</name>
        <dbReference type="ChEBI" id="CHEBI:58053"/>
        <note>ligand shared between dimeric partners</note>
    </ligand>
</feature>
<feature type="binding site" evidence="1">
    <location>
        <position position="315"/>
    </location>
    <ligand>
        <name>GTP</name>
        <dbReference type="ChEBI" id="CHEBI:37565"/>
    </ligand>
</feature>
<feature type="binding site" evidence="1">
    <location>
        <begin position="341"/>
        <end position="343"/>
    </location>
    <ligand>
        <name>GTP</name>
        <dbReference type="ChEBI" id="CHEBI:37565"/>
    </ligand>
</feature>
<feature type="binding site" evidence="1">
    <location>
        <begin position="422"/>
        <end position="424"/>
    </location>
    <ligand>
        <name>GTP</name>
        <dbReference type="ChEBI" id="CHEBI:37565"/>
    </ligand>
</feature>
<organism>
    <name type="scientific">Acinetobacter baylyi (strain ATCC 33305 / BD413 / ADP1)</name>
    <dbReference type="NCBI Taxonomy" id="62977"/>
    <lineage>
        <taxon>Bacteria</taxon>
        <taxon>Pseudomonadati</taxon>
        <taxon>Pseudomonadota</taxon>
        <taxon>Gammaproteobacteria</taxon>
        <taxon>Moraxellales</taxon>
        <taxon>Moraxellaceae</taxon>
        <taxon>Acinetobacter</taxon>
    </lineage>
</organism>
<proteinExistence type="inferred from homology"/>
<evidence type="ECO:0000255" key="1">
    <source>
        <dbReference type="HAMAP-Rule" id="MF_00011"/>
    </source>
</evidence>
<keyword id="KW-0963">Cytoplasm</keyword>
<keyword id="KW-0342">GTP-binding</keyword>
<keyword id="KW-0436">Ligase</keyword>
<keyword id="KW-0460">Magnesium</keyword>
<keyword id="KW-0479">Metal-binding</keyword>
<keyword id="KW-0547">Nucleotide-binding</keyword>
<keyword id="KW-0658">Purine biosynthesis</keyword>
<name>PURA_ACIAD</name>
<comment type="function">
    <text evidence="1">Plays an important role in the de novo pathway of purine nucleotide biosynthesis. Catalyzes the first committed step in the biosynthesis of AMP from IMP.</text>
</comment>
<comment type="catalytic activity">
    <reaction evidence="1">
        <text>IMP + L-aspartate + GTP = N(6)-(1,2-dicarboxyethyl)-AMP + GDP + phosphate + 2 H(+)</text>
        <dbReference type="Rhea" id="RHEA:15753"/>
        <dbReference type="ChEBI" id="CHEBI:15378"/>
        <dbReference type="ChEBI" id="CHEBI:29991"/>
        <dbReference type="ChEBI" id="CHEBI:37565"/>
        <dbReference type="ChEBI" id="CHEBI:43474"/>
        <dbReference type="ChEBI" id="CHEBI:57567"/>
        <dbReference type="ChEBI" id="CHEBI:58053"/>
        <dbReference type="ChEBI" id="CHEBI:58189"/>
        <dbReference type="EC" id="6.3.4.4"/>
    </reaction>
</comment>
<comment type="cofactor">
    <cofactor evidence="1">
        <name>Mg(2+)</name>
        <dbReference type="ChEBI" id="CHEBI:18420"/>
    </cofactor>
    <text evidence="1">Binds 1 Mg(2+) ion per subunit.</text>
</comment>
<comment type="pathway">
    <text evidence="1">Purine metabolism; AMP biosynthesis via de novo pathway; AMP from IMP: step 1/2.</text>
</comment>
<comment type="subunit">
    <text evidence="1">Homodimer.</text>
</comment>
<comment type="subcellular location">
    <subcellularLocation>
        <location evidence="1">Cytoplasm</location>
    </subcellularLocation>
</comment>
<comment type="similarity">
    <text evidence="1">Belongs to the adenylosuccinate synthetase family.</text>
</comment>
<dbReference type="EC" id="6.3.4.4" evidence="1"/>
<dbReference type="EMBL" id="CR543861">
    <property type="protein sequence ID" value="CAG68132.1"/>
    <property type="molecule type" value="Genomic_DNA"/>
</dbReference>
<dbReference type="RefSeq" id="WP_004925964.1">
    <property type="nucleotide sequence ID" value="NC_005966.1"/>
</dbReference>
<dbReference type="SMR" id="Q6FCS7"/>
<dbReference type="STRING" id="202950.GCA_001485005_01021"/>
<dbReference type="GeneID" id="45233680"/>
<dbReference type="KEGG" id="aci:ACIAD1258"/>
<dbReference type="eggNOG" id="COG0104">
    <property type="taxonomic scope" value="Bacteria"/>
</dbReference>
<dbReference type="HOGENOM" id="CLU_029848_0_0_6"/>
<dbReference type="OrthoDB" id="9807553at2"/>
<dbReference type="BioCyc" id="ASP62977:ACIAD_RS05785-MONOMER"/>
<dbReference type="UniPathway" id="UPA00075">
    <property type="reaction ID" value="UER00335"/>
</dbReference>
<dbReference type="Proteomes" id="UP000000430">
    <property type="component" value="Chromosome"/>
</dbReference>
<dbReference type="GO" id="GO:0005737">
    <property type="term" value="C:cytoplasm"/>
    <property type="evidence" value="ECO:0007669"/>
    <property type="project" value="UniProtKB-SubCell"/>
</dbReference>
<dbReference type="GO" id="GO:0004019">
    <property type="term" value="F:adenylosuccinate synthase activity"/>
    <property type="evidence" value="ECO:0007669"/>
    <property type="project" value="UniProtKB-UniRule"/>
</dbReference>
<dbReference type="GO" id="GO:0005525">
    <property type="term" value="F:GTP binding"/>
    <property type="evidence" value="ECO:0007669"/>
    <property type="project" value="UniProtKB-UniRule"/>
</dbReference>
<dbReference type="GO" id="GO:0000287">
    <property type="term" value="F:magnesium ion binding"/>
    <property type="evidence" value="ECO:0007669"/>
    <property type="project" value="UniProtKB-UniRule"/>
</dbReference>
<dbReference type="GO" id="GO:0044208">
    <property type="term" value="P:'de novo' AMP biosynthetic process"/>
    <property type="evidence" value="ECO:0007669"/>
    <property type="project" value="UniProtKB-UniRule"/>
</dbReference>
<dbReference type="GO" id="GO:0046040">
    <property type="term" value="P:IMP metabolic process"/>
    <property type="evidence" value="ECO:0007669"/>
    <property type="project" value="TreeGrafter"/>
</dbReference>
<dbReference type="CDD" id="cd03108">
    <property type="entry name" value="AdSS"/>
    <property type="match status" value="1"/>
</dbReference>
<dbReference type="FunFam" id="1.10.300.10:FF:000001">
    <property type="entry name" value="Adenylosuccinate synthetase"/>
    <property type="match status" value="1"/>
</dbReference>
<dbReference type="FunFam" id="3.90.170.10:FF:000001">
    <property type="entry name" value="Adenylosuccinate synthetase"/>
    <property type="match status" value="1"/>
</dbReference>
<dbReference type="Gene3D" id="3.40.440.10">
    <property type="entry name" value="Adenylosuccinate Synthetase, subunit A, domain 1"/>
    <property type="match status" value="1"/>
</dbReference>
<dbReference type="Gene3D" id="1.10.300.10">
    <property type="entry name" value="Adenylosuccinate Synthetase, subunit A, domain 2"/>
    <property type="match status" value="1"/>
</dbReference>
<dbReference type="Gene3D" id="3.90.170.10">
    <property type="entry name" value="Adenylosuccinate Synthetase, subunit A, domain 3"/>
    <property type="match status" value="1"/>
</dbReference>
<dbReference type="HAMAP" id="MF_00011">
    <property type="entry name" value="Adenylosucc_synth"/>
    <property type="match status" value="1"/>
</dbReference>
<dbReference type="InterPro" id="IPR018220">
    <property type="entry name" value="Adenylosuccin_syn_GTP-bd"/>
</dbReference>
<dbReference type="InterPro" id="IPR033128">
    <property type="entry name" value="Adenylosuccin_syn_Lys_AS"/>
</dbReference>
<dbReference type="InterPro" id="IPR042109">
    <property type="entry name" value="Adenylosuccinate_synth_dom1"/>
</dbReference>
<dbReference type="InterPro" id="IPR042110">
    <property type="entry name" value="Adenylosuccinate_synth_dom2"/>
</dbReference>
<dbReference type="InterPro" id="IPR042111">
    <property type="entry name" value="Adenylosuccinate_synth_dom3"/>
</dbReference>
<dbReference type="InterPro" id="IPR001114">
    <property type="entry name" value="Adenylosuccinate_synthetase"/>
</dbReference>
<dbReference type="InterPro" id="IPR027417">
    <property type="entry name" value="P-loop_NTPase"/>
</dbReference>
<dbReference type="NCBIfam" id="NF002223">
    <property type="entry name" value="PRK01117.1"/>
    <property type="match status" value="1"/>
</dbReference>
<dbReference type="NCBIfam" id="TIGR00184">
    <property type="entry name" value="purA"/>
    <property type="match status" value="1"/>
</dbReference>
<dbReference type="PANTHER" id="PTHR11846">
    <property type="entry name" value="ADENYLOSUCCINATE SYNTHETASE"/>
    <property type="match status" value="1"/>
</dbReference>
<dbReference type="PANTHER" id="PTHR11846:SF0">
    <property type="entry name" value="ADENYLOSUCCINATE SYNTHETASE"/>
    <property type="match status" value="1"/>
</dbReference>
<dbReference type="Pfam" id="PF00709">
    <property type="entry name" value="Adenylsucc_synt"/>
    <property type="match status" value="1"/>
</dbReference>
<dbReference type="SMART" id="SM00788">
    <property type="entry name" value="Adenylsucc_synt"/>
    <property type="match status" value="1"/>
</dbReference>
<dbReference type="SUPFAM" id="SSF52540">
    <property type="entry name" value="P-loop containing nucleoside triphosphate hydrolases"/>
    <property type="match status" value="1"/>
</dbReference>
<dbReference type="PROSITE" id="PS01266">
    <property type="entry name" value="ADENYLOSUCCIN_SYN_1"/>
    <property type="match status" value="1"/>
</dbReference>
<dbReference type="PROSITE" id="PS00513">
    <property type="entry name" value="ADENYLOSUCCIN_SYN_2"/>
    <property type="match status" value="1"/>
</dbReference>
<accession>Q6FCS7</accession>